<organism>
    <name type="scientific">Homo sapiens</name>
    <name type="common">Human</name>
    <dbReference type="NCBI Taxonomy" id="9606"/>
    <lineage>
        <taxon>Eukaryota</taxon>
        <taxon>Metazoa</taxon>
        <taxon>Chordata</taxon>
        <taxon>Craniata</taxon>
        <taxon>Vertebrata</taxon>
        <taxon>Euteleostomi</taxon>
        <taxon>Mammalia</taxon>
        <taxon>Eutheria</taxon>
        <taxon>Euarchontoglires</taxon>
        <taxon>Primates</taxon>
        <taxon>Haplorrhini</taxon>
        <taxon>Catarrhini</taxon>
        <taxon>Hominidae</taxon>
        <taxon>Homo</taxon>
    </lineage>
</organism>
<comment type="function">
    <text evidence="2 14 18 19 20 21 22">Mitochondrial enzyme that catalyzes the carboxylation of acetyl-CoA to malonyl-CoA and plays a central role in fatty acid metabolism (PubMed:16854592, PubMed:19236960, PubMed:19900410, PubMed:20457939, PubMed:20952656, PubMed:26976583). Catalyzes a 2 steps reaction starting with the ATP-dependent carboxylation of the biotin carried by the biotin carboxyl carrier (BCC) domain followed by the transfer of the carboxyl group from carboxylated biotin to acetyl-CoA (PubMed:19236960, PubMed:20457939, PubMed:20952656, PubMed:26976583). Through the production of malonyl-CoA that allosterically inhibits carnitine palmitoyltransferase 1 at the mitochondria, negatively regulates fatty acid oxidation (By similarity). Together with its cytosolic isozyme ACACA, which is involved in de novo fatty acid biosynthesis, promotes lipid storage (By similarity).</text>
</comment>
<comment type="catalytic activity">
    <reaction evidence="14 18 19 20 21 22">
        <text>hydrogencarbonate + acetyl-CoA + ATP = malonyl-CoA + ADP + phosphate + H(+)</text>
        <dbReference type="Rhea" id="RHEA:11308"/>
        <dbReference type="ChEBI" id="CHEBI:15378"/>
        <dbReference type="ChEBI" id="CHEBI:17544"/>
        <dbReference type="ChEBI" id="CHEBI:30616"/>
        <dbReference type="ChEBI" id="CHEBI:43474"/>
        <dbReference type="ChEBI" id="CHEBI:57288"/>
        <dbReference type="ChEBI" id="CHEBI:57384"/>
        <dbReference type="ChEBI" id="CHEBI:456216"/>
        <dbReference type="EC" id="6.4.1.2"/>
    </reaction>
    <physiologicalReaction direction="left-to-right" evidence="19 22">
        <dbReference type="Rhea" id="RHEA:11309"/>
    </physiologicalReaction>
</comment>
<comment type="cofactor">
    <cofactor evidence="14 15">
        <name>biotin</name>
        <dbReference type="ChEBI" id="CHEBI:57586"/>
    </cofactor>
</comment>
<comment type="cofactor">
    <cofactor evidence="5 6">
        <name>Mg(2+)</name>
        <dbReference type="ChEBI" id="CHEBI:18420"/>
    </cofactor>
    <cofactor evidence="5 6">
        <name>Mn(2+)</name>
        <dbReference type="ChEBI" id="CHEBI:29035"/>
    </cofactor>
    <text evidence="5 6">Binds 2 magnesium or manganese ions per subunit.</text>
</comment>
<comment type="activity regulation">
    <text evidence="13 14 19 20 29">Activity is increased by oligomerization of the protein into filaments (PubMed:19900410). The oligomerization and the activity of the enzyme are inhibited by phosphorylation at Ser-222 (PubMed:12488245). Inhibited by its product, malonyl-CoA (PubMed:16854592). Activated by citrate (PubMed:16854592). Activation by MID1IP1 is citrate-dependent (PubMed:20457939). Soraphen A, inhibits the enzyme by preventing the formation of active filamentous oligomers (Probable).</text>
</comment>
<comment type="biophysicochemical properties">
    <kinetics>
        <KM evidence="14">120 uM for ATP</KM>
        <KM evidence="17">110 uM for ATP (isoform 2)</KM>
        <KM evidence="14">58 uM for acetyl-CoA</KM>
        <KM evidence="17">94 uM for acetyl-CoA (isoform 3)</KM>
        <KM evidence="17">6.5 mM for NaHCO3 (isoform 3)</KM>
        <KM evidence="14">3 mM for NaHCO(3)</KM>
    </kinetics>
    <phDependence>
        <text evidence="29">Optimum pH is 7.5.</text>
    </phDependence>
</comment>
<comment type="pathway">
    <text evidence="19 22">Lipid metabolism; malonyl-CoA biosynthesis; malonyl-CoA from acetyl-CoA: step 1/1.</text>
</comment>
<comment type="subunit">
    <text evidence="16 19 20 21">Monomer, homodimer, and homotetramer (PubMed:18772397, PubMed:20952656). Forms filamentous polymers (PubMed:19900410, PubMed:20457939, PubMed:20952656). Interacts with MID1IP1; interaction with MID1IP1 promotes oligomerization and increases its activity in a citrate-dependent manner (PubMed:20457939, PubMed:20952656).</text>
</comment>
<comment type="interaction">
    <interactant intactId="EBI-2211739">
        <id>O00763</id>
    </interactant>
    <interactant intactId="EBI-2211739">
        <id>O00763</id>
        <label>ACACB</label>
    </interactant>
    <organismsDiffer>false</organismsDiffer>
    <experiments>2</experiments>
</comment>
<comment type="interaction">
    <interactant intactId="EBI-2211739">
        <id>O00763</id>
    </interactant>
    <interactant intactId="EBI-3915568">
        <id>P50747</id>
        <label>HLCS</label>
    </interactant>
    <organismsDiffer>false</organismsDiffer>
    <experiments>4</experiments>
</comment>
<comment type="interaction">
    <interactant intactId="EBI-2211739">
        <id>O00763</id>
    </interactant>
    <interactant intactId="EBI-473024">
        <id>Q9CQ20</id>
        <label>Mid1ip1</label>
    </interactant>
    <organismsDiffer>true</organismsDiffer>
    <experiments>4</experiments>
</comment>
<comment type="subcellular location">
    <subcellularLocation>
        <location evidence="12">Mitochondrion</location>
    </subcellularLocation>
</comment>
<comment type="alternative products">
    <event type="alternative splicing"/>
    <isoform>
        <id>O00763-1</id>
        <name>1</name>
        <name>Long</name>
        <sequence type="displayed"/>
    </isoform>
    <isoform>
        <id>O00763-2</id>
        <name>2</name>
        <name>Short</name>
        <sequence type="described" ref="VSP_000547"/>
    </isoform>
    <isoform>
        <id>O00763-3</id>
        <name evidence="27">3</name>
        <name evidence="25">ACC2.v2</name>
        <sequence type="described" ref="VSP_057081 VSP_057082"/>
    </isoform>
</comment>
<comment type="tissue specificity">
    <text evidence="17 23">Widely expressed with highest levels in heart, skeletal muscle, liver, adipose tissue, mammary gland, adrenal gland and colon (PubMed:9099716). Isoform 3 is expressed in skeletal muscle, adipose tissue and liver (at protein level) (PubMed:19190759). Isoform 3 is detected at high levels in adipose tissue with lower levels in heart, liver, skeletal muscle and testis (PubMed:19190759).</text>
</comment>
<comment type="domain">
    <text evidence="28 30">Consists of an N-terminal biotin carboxylation/carboxylase (BC) domain that catalyzes the ATP-dependent transient carboxylation of the biotin covalently attached to the central biotinyl-binding/biotin carboxyl carrier (BCC) domain (Probable). The C-terminal carboxyl transferase (CT) domain catalyzes the transfer of the carboxyl group from carboxylated biotin to acetyl-CoA to produce malonyl-CoA (Probable).</text>
</comment>
<comment type="PTM">
    <text evidence="28">The biotin cofactor is covalently attached to the central biotinyl-binding domain and is required for the catalytic activity.</text>
</comment>
<comment type="PTM">
    <text evidence="2 13">Phosphorylation at Ser-222 by AMPK inactivates the enzyme (PubMed:12488245). Required for the maintenance of skeletal muscle lipid and glucose homeostasis (By similarity).</text>
</comment>
<comment type="biotechnology">
    <text evidence="27">Inhibition of ACACB may prevent lipid-induced insulin resistance and type 2 diabetes, making the enzyme a potential pharmaceutical target for treatment of obesity and type 2 diabetes.</text>
</comment>
<comment type="sequence caution" evidence="27">
    <conflict type="miscellaneous discrepancy">
        <sequence resource="EMBL-CDS" id="AAB58382"/>
    </conflict>
    <text>Many Frameshifts and conflicts.</text>
</comment>
<comment type="sequence caution" evidence="27">
    <conflict type="erroneous translation">
        <sequence resource="EMBL-CDS" id="CAE01470"/>
    </conflict>
    <text>Wrong choice of CDS.</text>
</comment>
<sequence length="2458" mass="276541">MVLLLCLSCLIFSCLTFSWLKIWGKMTDSKPITKSKSEANLIPSQEPFPASDNSGETPQRNGEGHTLPKTPSQAEPASHKGPKDAGRRRNSLPPSHQKPPRNPLSSSDAAPSPELQANGTGTQGLEATDTNGLSSSARPQGQQAGSPSKEDKKQANIKRQLMTNFILGSFDDYSSDEDSVAGSSRESTRKGSRASLGALSLEAYLTTGEAETRVPTMRPSMSGLHLVKRGREHKKLDLHRDFTVASPAEFVTRFGGDRVIEKVLIANNGIAAVKCMRSIRRWAYEMFRNERAIRFVVMVTPEDLKANAEYIKMADHYVPVPGGPNNNNYANVELIVDIAKRIPVQAVWAGWGHASENPKLPELLCKNGVAFLGPPSEAMWALGDKIASTVVAQTLQVPTLPWSGSGLTVEWTEDDLQQGKRISVPEDVYDKGCVKDVDEGLEAAERIGFPLMIKASEGGGGKGIRKAESAEDFPILFRQVQSEIPGSPIFLMKLAQHARHLEVQILADQYGNAVSLFGRDCSIQRRHQKIVEEAPATIAPLAIFEFMEQCAIRLAKTVGYVSAGTVEYLYSQDGSFHFLELNPRLQVEHPCTEMIADVNLPAAQLQIAMGVPLHRLKDIRLLYGESPWGVTPISFETPSNPPLARGHVIAARITSENPDEGFKPSSGTVQELNFRSSKNVWGYFSVAATGGLHEFADSQFGHCFSWGENREEAISNMVVALKELSIRGDFRTTVEYLINLLETESFQNNDIDTGWLDYLIAEKVQAEKPDIMLGVVCGALNVADAMFRTCMTDFLHSLERGQVLPADSLLNLVDVELIYGGVKYILKVARQSLTMFVLIMNGCHIEIDAHRLNDGGLLLSYNGNSYTTYMKEEVDSYRITIGNKTCVFEKENDPTVLRSPSAGKLTQYTVEDGGHVEAGSSYAEMEVMKMIMTLNVQERGRVKYIKRPGAVLEAGCVVARLELDDPSKVHPAEPFTGELPAQQTLPILGEKLHQVFHSVLENLTNVMSGFCLPEPVFSIKLKEWVQKLMMTLRHPSLPLLELQEIMTSVAGRIPAPVEKSVRRVMAQYASNITSVLCQFPSQQIATILDCHAATLQRKADREVFFINTQSIVQLVQRYRSGIRGYMKTVVLDLLRRYLRVEHHFQQAHYDKCVINLREQFKPDMSQVLDCIFSHAQVAKKNQLVIMLIDELCGPDPSLSDELISILNELTQLSKSEHCKVALRARQILIASHLPSYELRHNQVESIFLSAIDMYGHQFCPENLKKLILSETTIFDVLPTFFYHANKVVCMASLEVYVRRGYIAYELNSLQHRQLPDGTCVVEFQFMLPSSHPNRMTVPISITNPDLLRHSTELFMDSGFSPLCQRMGAMVAFRRFEDFTRNFDEVISCFANVPKDTPLFSEARTSLYSEDDCKSLREEPIHILNVSIQCADHLEDEALVPILRTFVQSKKNILVDYGLRRITFLIAQEKEFPKFFTFRARDEFAEDRIYRHLEPALAFQLELNRMRNFDLTAVPCANHKMHLYLGAAKVKEGVEVTDHRFFIRAIIRHSDLITKEASFEYLQNEGERLLLEAMDELEVAFNNTSVRTDCNHIFLNFVPTVIMDPFKIEESVRYMVMRYGSRLWKLRVLQAEVKINIRQTTTGSAVPIRLFITNESGYYLDISLYKEVTDSRSGNIMFHSFGNKQGPQHGMLINTPYVTKDLLQAKRFQAQTLGTTYIYDFPEMFRQALFKLWGSPDKYPKDILTYTELVLDSQGQLVEMNRLPGGNEVGMVAFKMRFKTQEYPEGRDVIVIGNDITFRIGSFGPGEDLLYLRASEMARAEGIPKIYVAANSGARIGMAEEIKHMFHVAWVDPEDPHKGFKYLYLTPQDYTRISSLNSVHCKHIEEGGESRYMITDIIGKDDGLGVENLRGSGMIAGESSLAYEEIVTISLVTCRAIGIGAYLVRLGQRVIQVENSHIILTGASALNKVLGREVYTSNNQLGGVQIMHYNGVSHITVPDDFEGVYTILEWLSYMPKDNHSPVPIITPTDPIDREIEFLPSRAPYDPRWMLAGRPHPTLKGTWQSGFFDHGSFKEIMAPWAQTVVTGRARLGGIPVGVIAVETRTVEVAVPADPANLDSEAKIIQQAGQVWFPDSAYKTAQAVKDFNREKLPLMIFANWRGFSGGMKDMYDQVLKFGAYIVDGLRQYKQPILIYIPPYAELRGGSWVVIDATINPLCIEMYADKESRGGVLEPEGTVEIKFRKKDLIKSMRRIDPAYKKLMEQLGEPDLSDKDRKDLEGRLKAREDLLLPIYHQVAVQFADFHDTPGRMLEKGVISDILEWKTARTFLYWRLRRLLLEDQVKQEILQASGELSHVHIQSMLRRWFVETEGAVKAYLWDNNQVVVQWLEQHWQAGDGPRSTIRENITYLKHDSVLKTIRGLVEENPEVAVDCVIYLSQHISPAERAQVVHLLSTMDSPAST</sequence>
<accession>O00763</accession>
<accession>A6NK36</accession>
<accession>Q16852</accession>
<accession>Q1HEC1</accession>
<accession>Q6KE87</accession>
<accession>Q6KE89</accession>
<accession>Q6TY48</accession>
<feature type="transit peptide" description="Mitochondrion" evidence="2">
    <location>
        <begin position="1"/>
        <end status="unknown"/>
    </location>
</feature>
<feature type="chain" id="PRO_0000146767" description="Acetyl-CoA carboxylase 2" evidence="27">
    <location>
        <begin status="unknown"/>
        <end position="2458"/>
    </location>
</feature>
<feature type="domain" description="Biotin carboxylation" evidence="6">
    <location>
        <begin position="259"/>
        <end position="761"/>
    </location>
</feature>
<feature type="domain" description="ATP-grasp" evidence="5">
    <location>
        <begin position="414"/>
        <end position="609"/>
    </location>
</feature>
<feature type="domain" description="Biotinyl-binding" evidence="7">
    <location>
        <begin position="888"/>
        <end position="962"/>
    </location>
</feature>
<feature type="domain" description="CoA carboxyltransferase N-terminal" evidence="8">
    <location>
        <begin position="1695"/>
        <end position="2025"/>
    </location>
</feature>
<feature type="domain" description="CoA carboxyltransferase C-terminal" evidence="9">
    <location>
        <begin position="2029"/>
        <end position="2345"/>
    </location>
</feature>
<feature type="region of interest" description="Disordered" evidence="11">
    <location>
        <begin position="35"/>
        <end position="155"/>
    </location>
</feature>
<feature type="region of interest" description="Disordered" evidence="11">
    <location>
        <begin position="174"/>
        <end position="193"/>
    </location>
</feature>
<feature type="region of interest" description="Carboxyltransferase" evidence="10">
    <location>
        <begin position="1695"/>
        <end position="2345"/>
    </location>
</feature>
<feature type="compositionally biased region" description="Polar residues" evidence="11">
    <location>
        <begin position="51"/>
        <end position="60"/>
    </location>
</feature>
<feature type="compositionally biased region" description="Basic and acidic residues" evidence="11">
    <location>
        <begin position="77"/>
        <end position="87"/>
    </location>
</feature>
<feature type="compositionally biased region" description="Polar residues" evidence="11">
    <location>
        <begin position="103"/>
        <end position="146"/>
    </location>
</feature>
<feature type="active site" evidence="1">
    <location>
        <position position="584"/>
    </location>
</feature>
<feature type="binding site" evidence="5">
    <location>
        <begin position="458"/>
        <end position="463"/>
    </location>
    <ligand>
        <name>ATP</name>
        <dbReference type="ChEBI" id="CHEBI:30616"/>
    </ligand>
</feature>
<feature type="binding site" evidence="5 6">
    <location>
        <position position="567"/>
    </location>
    <ligand>
        <name>Mg(2+)</name>
        <dbReference type="ChEBI" id="CHEBI:18420"/>
        <label>1</label>
    </ligand>
</feature>
<feature type="binding site" evidence="5 6">
    <location>
        <position position="567"/>
    </location>
    <ligand>
        <name>Mn(2+)</name>
        <dbReference type="ChEBI" id="CHEBI:29035"/>
        <label>1</label>
    </ligand>
</feature>
<feature type="binding site" evidence="5 6">
    <location>
        <position position="580"/>
    </location>
    <ligand>
        <name>Mg(2+)</name>
        <dbReference type="ChEBI" id="CHEBI:18420"/>
        <label>1</label>
    </ligand>
</feature>
<feature type="binding site" evidence="5 6">
    <location>
        <position position="580"/>
    </location>
    <ligand>
        <name>Mg(2+)</name>
        <dbReference type="ChEBI" id="CHEBI:18420"/>
        <label>2</label>
    </ligand>
</feature>
<feature type="binding site" evidence="5 6">
    <location>
        <position position="580"/>
    </location>
    <ligand>
        <name>Mn(2+)</name>
        <dbReference type="ChEBI" id="CHEBI:29035"/>
        <label>1</label>
    </ligand>
</feature>
<feature type="binding site" evidence="5 6">
    <location>
        <position position="580"/>
    </location>
    <ligand>
        <name>Mn(2+)</name>
        <dbReference type="ChEBI" id="CHEBI:29035"/>
        <label>2</label>
    </ligand>
</feature>
<feature type="binding site" evidence="5 6">
    <location>
        <position position="582"/>
    </location>
    <ligand>
        <name>Mg(2+)</name>
        <dbReference type="ChEBI" id="CHEBI:18420"/>
        <label>2</label>
    </ligand>
</feature>
<feature type="binding site" evidence="5 6">
    <location>
        <position position="582"/>
    </location>
    <ligand>
        <name>Mn(2+)</name>
        <dbReference type="ChEBI" id="CHEBI:29035"/>
        <label>2</label>
    </ligand>
</feature>
<feature type="binding site" evidence="1">
    <location>
        <position position="1934"/>
    </location>
    <ligand>
        <name>CoA</name>
        <dbReference type="ChEBI" id="CHEBI:57287"/>
    </ligand>
</feature>
<feature type="binding site" evidence="1">
    <location>
        <position position="2238"/>
    </location>
    <ligand>
        <name>CoA</name>
        <dbReference type="ChEBI" id="CHEBI:57287"/>
    </ligand>
</feature>
<feature type="binding site" evidence="1">
    <location>
        <position position="2240"/>
    </location>
    <ligand>
        <name>CoA</name>
        <dbReference type="ChEBI" id="CHEBI:57287"/>
    </ligand>
</feature>
<feature type="modified residue" description="Phosphoserine" evidence="32">
    <location>
        <position position="35"/>
    </location>
</feature>
<feature type="modified residue" description="Phosphothreonine" evidence="32">
    <location>
        <position position="70"/>
    </location>
</feature>
<feature type="modified residue" description="Phosphoserine" evidence="32">
    <location>
        <position position="91"/>
    </location>
</feature>
<feature type="modified residue" description="Phosphoserine" evidence="32">
    <location>
        <position position="95"/>
    </location>
</feature>
<feature type="modified residue" description="Phosphoserine" evidence="4">
    <location>
        <position position="169"/>
    </location>
</feature>
<feature type="modified residue" description="Phosphoserine" evidence="4">
    <location>
        <position position="175"/>
    </location>
</feature>
<feature type="modified residue" description="Phosphoserine" evidence="4">
    <location>
        <position position="192"/>
    </location>
</feature>
<feature type="modified residue" description="Phosphoserine" evidence="4">
    <location>
        <position position="195"/>
    </location>
</feature>
<feature type="modified residue" description="Phosphoserine" evidence="32">
    <location>
        <position position="200"/>
    </location>
</feature>
<feature type="modified residue" description="Phosphothreonine" evidence="2">
    <location>
        <position position="207"/>
    </location>
</feature>
<feature type="modified residue" description="Phosphoserine" evidence="3">
    <location>
        <position position="220"/>
    </location>
</feature>
<feature type="modified residue" description="Phosphoserine; by AMPK" evidence="13 19">
    <location>
        <position position="222"/>
    </location>
</feature>
<feature type="modified residue" description="Phosphoserine" evidence="32">
    <location>
        <position position="469"/>
    </location>
</feature>
<feature type="modified residue" description="Phosphothreonine" evidence="4">
    <location>
        <position position="753"/>
    </location>
</feature>
<feature type="modified residue" description="N6-biotinyllysine" evidence="7 15">
    <location>
        <position position="929"/>
    </location>
</feature>
<feature type="modified residue" description="Phosphoserine" evidence="2">
    <location>
        <position position="1340"/>
    </location>
</feature>
<feature type="modified residue" description="Phosphothreonine" evidence="32">
    <location>
        <position position="1342"/>
    </location>
</feature>
<feature type="modified residue" description="Phosphoserine" evidence="2">
    <location>
        <position position="1360"/>
    </location>
</feature>
<feature type="modified residue" description="Phosphoserine" evidence="4">
    <location>
        <position position="1405"/>
    </location>
</feature>
<feature type="splice variant" id="VSP_057081" description="In isoform 3." evidence="17">
    <location>
        <begin position="1"/>
        <end position="202"/>
    </location>
</feature>
<feature type="splice variant" id="VSP_057082" description="In isoform 3." evidence="17">
    <original>AYLTTGEAETRVPTMR</original>
    <variation>MSPAKCKICFPDREVK</variation>
    <location>
        <begin position="203"/>
        <end position="218"/>
    </location>
</feature>
<feature type="splice variant" id="VSP_000547" description="In isoform 2." evidence="26">
    <location>
        <begin position="1118"/>
        <end position="1187"/>
    </location>
</feature>
<feature type="sequence variant" id="VAR_062667" description="In a pancreatic ductal adenocarcinoma sample; somatic mutation." evidence="16">
    <original>R</original>
    <variation>L</variation>
    <location>
        <position position="193"/>
    </location>
</feature>
<feature type="sequence variant" id="VAR_031255" description="In dbSNP:rs16940029.">
    <original>I</original>
    <variation>V</variation>
    <location>
        <position position="552"/>
    </location>
</feature>
<feature type="sequence variant" id="VAR_031256" description="In dbSNP:rs2300455.">
    <original>A</original>
    <variation>T</variation>
    <location>
        <position position="651"/>
    </location>
</feature>
<feature type="sequence variant" id="VAR_031257" description="In dbSNP:rs2075260." evidence="14 24">
    <original>V</original>
    <variation>I</variation>
    <location>
        <position position="2141"/>
    </location>
</feature>
<feature type="mutagenesis site" description="Loss of regulation of oligomerization by phosphorylation at S-222." evidence="19">
    <original>R</original>
    <variation>A</variation>
    <location>
        <position position="277"/>
    </location>
</feature>
<feature type="mutagenesis site" description="Altered regulation of oligomerization by phosphorylation at S-222." evidence="19">
    <original>E</original>
    <variation>A</variation>
    <location>
        <position position="671"/>
    </location>
</feature>
<feature type="sequence conflict" description="In Ref. 2; ABF48723." evidence="27" ref="2">
    <original>C</original>
    <variation>R</variation>
    <location>
        <position position="9"/>
    </location>
</feature>
<feature type="sequence conflict" description="In Ref. 4; AAR37018." evidence="27" ref="4">
    <original>T</original>
    <variation>I</variation>
    <location>
        <position position="120"/>
    </location>
</feature>
<feature type="sequence conflict" description="In Ref. 4; AAR37018." evidence="27" ref="4">
    <original>I</original>
    <variation>T</variation>
    <location>
        <position position="422"/>
    </location>
</feature>
<feature type="sequence conflict" description="In Ref. 6; AAC50571." evidence="27" ref="6">
    <original>S</original>
    <variation>N</variation>
    <location>
        <position position="1340"/>
    </location>
</feature>
<feature type="sequence conflict" description="In Ref. 6; AAC50571." evidence="27" ref="6">
    <original>D</original>
    <variation>G</variation>
    <location>
        <position position="1383"/>
    </location>
</feature>
<feature type="sequence conflict" description="In Ref. 6; AAC50571." evidence="27" ref="6">
    <original>V</original>
    <variation>M</variation>
    <location>
        <position position="1425"/>
    </location>
</feature>
<feature type="sequence conflict" description="In Ref. 6; AAC50571." evidence="27" ref="6">
    <original>AEG</original>
    <variation>PEA</variation>
    <location>
        <begin position="1819"/>
        <end position="1821"/>
    </location>
</feature>
<feature type="sequence conflict" description="In Ref. 6; AAC50571." evidence="27" ref="6">
    <original>MI</original>
    <variation>IM</variation>
    <location>
        <begin position="1892"/>
        <end position="1893"/>
    </location>
</feature>
<feature type="helix" evidence="37">
    <location>
        <begin position="247"/>
        <end position="253"/>
    </location>
</feature>
<feature type="strand" evidence="37">
    <location>
        <begin position="262"/>
        <end position="265"/>
    </location>
</feature>
<feature type="helix" evidence="37">
    <location>
        <begin position="269"/>
        <end position="287"/>
    </location>
</feature>
<feature type="strand" evidence="37">
    <location>
        <begin position="292"/>
        <end position="299"/>
    </location>
</feature>
<feature type="helix" evidence="37">
    <location>
        <begin position="301"/>
        <end position="305"/>
    </location>
</feature>
<feature type="helix" evidence="37">
    <location>
        <begin position="309"/>
        <end position="313"/>
    </location>
</feature>
<feature type="strand" evidence="37">
    <location>
        <begin position="314"/>
        <end position="319"/>
    </location>
</feature>
<feature type="helix" evidence="37">
    <location>
        <begin position="325"/>
        <end position="327"/>
    </location>
</feature>
<feature type="turn" evidence="37">
    <location>
        <begin position="328"/>
        <end position="330"/>
    </location>
</feature>
<feature type="helix" evidence="37">
    <location>
        <begin position="332"/>
        <end position="341"/>
    </location>
</feature>
<feature type="strand" evidence="37">
    <location>
        <begin position="345"/>
        <end position="348"/>
    </location>
</feature>
<feature type="helix" evidence="37">
    <location>
        <begin position="353"/>
        <end position="356"/>
    </location>
</feature>
<feature type="helix" evidence="37">
    <location>
        <begin position="359"/>
        <end position="366"/>
    </location>
</feature>
<feature type="strand" evidence="37">
    <location>
        <begin position="370"/>
        <end position="373"/>
    </location>
</feature>
<feature type="helix" evidence="37">
    <location>
        <begin position="376"/>
        <end position="379"/>
    </location>
</feature>
<feature type="helix" evidence="37">
    <location>
        <begin position="385"/>
        <end position="394"/>
    </location>
</feature>
<feature type="turn" evidence="37">
    <location>
        <begin position="403"/>
        <end position="406"/>
    </location>
</feature>
<feature type="helix" evidence="37">
    <location>
        <begin position="426"/>
        <end position="431"/>
    </location>
</feature>
<feature type="helix" evidence="37">
    <location>
        <begin position="437"/>
        <end position="447"/>
    </location>
</feature>
<feature type="strand" evidence="37">
    <location>
        <begin position="449"/>
        <end position="455"/>
    </location>
</feature>
<feature type="strand" evidence="37">
    <location>
        <begin position="464"/>
        <end position="467"/>
    </location>
</feature>
<feature type="turn" evidence="37">
    <location>
        <begin position="470"/>
        <end position="472"/>
    </location>
</feature>
<feature type="helix" evidence="37">
    <location>
        <begin position="473"/>
        <end position="483"/>
    </location>
</feature>
<feature type="strand" evidence="37">
    <location>
        <begin position="489"/>
        <end position="493"/>
    </location>
</feature>
<feature type="strand" evidence="37">
    <location>
        <begin position="496"/>
        <end position="507"/>
    </location>
</feature>
<feature type="strand" evidence="38">
    <location>
        <begin position="509"/>
        <end position="511"/>
    </location>
</feature>
<feature type="strand" evidence="37">
    <location>
        <begin position="513"/>
        <end position="523"/>
    </location>
</feature>
<feature type="strand" evidence="40">
    <location>
        <begin position="524"/>
        <end position="527"/>
    </location>
</feature>
<feature type="strand" evidence="37">
    <location>
        <begin position="530"/>
        <end position="535"/>
    </location>
</feature>
<feature type="helix" evidence="37">
    <location>
        <begin position="541"/>
        <end position="558"/>
    </location>
</feature>
<feature type="strand" evidence="37">
    <location>
        <begin position="562"/>
        <end position="571"/>
    </location>
</feature>
<feature type="strand" evidence="34">
    <location>
        <begin position="572"/>
        <end position="574"/>
    </location>
</feature>
<feature type="strand" evidence="37">
    <location>
        <begin position="576"/>
        <end position="582"/>
    </location>
</feature>
<feature type="helix" evidence="37">
    <location>
        <begin position="589"/>
        <end position="596"/>
    </location>
</feature>
<feature type="helix" evidence="37">
    <location>
        <begin position="600"/>
        <end position="608"/>
    </location>
</feature>
<feature type="helix" evidence="37">
    <location>
        <begin position="613"/>
        <end position="615"/>
    </location>
</feature>
<feature type="helix" evidence="37">
    <location>
        <begin position="617"/>
        <end position="622"/>
    </location>
</feature>
<feature type="strand" evidence="34">
    <location>
        <begin position="635"/>
        <end position="637"/>
    </location>
</feature>
<feature type="strand" evidence="37">
    <location>
        <begin position="646"/>
        <end position="653"/>
    </location>
</feature>
<feature type="strand" evidence="37">
    <location>
        <begin position="669"/>
        <end position="671"/>
    </location>
</feature>
<feature type="strand" evidence="37">
    <location>
        <begin position="679"/>
        <end position="685"/>
    </location>
</feature>
<feature type="strand" evidence="37">
    <location>
        <begin position="700"/>
        <end position="709"/>
    </location>
</feature>
<feature type="helix" evidence="37">
    <location>
        <begin position="710"/>
        <end position="724"/>
    </location>
</feature>
<feature type="helix" evidence="34">
    <location>
        <begin position="728"/>
        <end position="730"/>
    </location>
</feature>
<feature type="helix" evidence="37">
    <location>
        <begin position="732"/>
        <end position="742"/>
    </location>
</feature>
<feature type="helix" evidence="37">
    <location>
        <begin position="744"/>
        <end position="748"/>
    </location>
</feature>
<feature type="helix" evidence="34">
    <location>
        <begin position="754"/>
        <end position="756"/>
    </location>
</feature>
<feature type="strand" evidence="33">
    <location>
        <begin position="896"/>
        <end position="898"/>
    </location>
</feature>
<feature type="strand" evidence="35">
    <location>
        <begin position="900"/>
        <end position="902"/>
    </location>
</feature>
<feature type="strand" evidence="33">
    <location>
        <begin position="903"/>
        <end position="910"/>
    </location>
</feature>
<feature type="strand" evidence="33">
    <location>
        <begin position="914"/>
        <end position="916"/>
    </location>
</feature>
<feature type="strand" evidence="33">
    <location>
        <begin position="921"/>
        <end position="927"/>
    </location>
</feature>
<feature type="strand" evidence="33">
    <location>
        <begin position="930"/>
        <end position="935"/>
    </location>
</feature>
<feature type="strand" evidence="33">
    <location>
        <begin position="937"/>
        <end position="944"/>
    </location>
</feature>
<feature type="strand" evidence="33">
    <location>
        <begin position="957"/>
        <end position="961"/>
    </location>
</feature>
<feature type="turn" evidence="36">
    <location>
        <begin position="1698"/>
        <end position="1700"/>
    </location>
</feature>
<feature type="helix" evidence="39">
    <location>
        <begin position="1703"/>
        <end position="1711"/>
    </location>
</feature>
<feature type="helix" evidence="39">
    <location>
        <begin position="1717"/>
        <end position="1719"/>
    </location>
</feature>
<feature type="helix" evidence="39">
    <location>
        <begin position="1720"/>
        <end position="1732"/>
    </location>
</feature>
<feature type="strand" evidence="39">
    <location>
        <begin position="1742"/>
        <end position="1750"/>
    </location>
</feature>
<feature type="strand" evidence="39">
    <location>
        <begin position="1756"/>
        <end position="1759"/>
    </location>
</feature>
<feature type="strand" evidence="39">
    <location>
        <begin position="1767"/>
        <end position="1777"/>
    </location>
</feature>
<feature type="strand" evidence="39">
    <location>
        <begin position="1786"/>
        <end position="1793"/>
    </location>
</feature>
<feature type="helix" evidence="39">
    <location>
        <begin position="1798"/>
        <end position="1800"/>
    </location>
</feature>
<feature type="helix" evidence="39">
    <location>
        <begin position="1804"/>
        <end position="1820"/>
    </location>
</feature>
<feature type="strand" evidence="39">
    <location>
        <begin position="1824"/>
        <end position="1828"/>
    </location>
</feature>
<feature type="helix" evidence="39">
    <location>
        <begin position="1839"/>
        <end position="1842"/>
    </location>
</feature>
<feature type="strand" evidence="39">
    <location>
        <begin position="1846"/>
        <end position="1850"/>
    </location>
</feature>
<feature type="helix" evidence="39">
    <location>
        <begin position="1855"/>
        <end position="1857"/>
    </location>
</feature>
<feature type="strand" evidence="39">
    <location>
        <begin position="1859"/>
        <end position="1864"/>
    </location>
</feature>
<feature type="helix" evidence="39">
    <location>
        <begin position="1866"/>
        <end position="1872"/>
    </location>
</feature>
<feature type="turn" evidence="39">
    <location>
        <begin position="1873"/>
        <end position="1876"/>
    </location>
</feature>
<feature type="strand" evidence="39">
    <location>
        <begin position="1878"/>
        <end position="1885"/>
    </location>
</feature>
<feature type="strand" evidence="39">
    <location>
        <begin position="1888"/>
        <end position="1896"/>
    </location>
</feature>
<feature type="strand" evidence="39">
    <location>
        <begin position="1899"/>
        <end position="1901"/>
    </location>
</feature>
<feature type="helix" evidence="39">
    <location>
        <begin position="1905"/>
        <end position="1924"/>
    </location>
</feature>
<feature type="strand" evidence="39">
    <location>
        <begin position="1927"/>
        <end position="1931"/>
    </location>
</feature>
<feature type="strand" evidence="39">
    <location>
        <begin position="1933"/>
        <end position="1936"/>
    </location>
</feature>
<feature type="helix" evidence="39">
    <location>
        <begin position="1938"/>
        <end position="1946"/>
    </location>
</feature>
<feature type="strand" evidence="39">
    <location>
        <begin position="1948"/>
        <end position="1952"/>
    </location>
</feature>
<feature type="strand" evidence="39">
    <location>
        <begin position="1956"/>
        <end position="1960"/>
    </location>
</feature>
<feature type="helix" evidence="39">
    <location>
        <begin position="1962"/>
        <end position="1969"/>
    </location>
</feature>
<feature type="helix" evidence="39">
    <location>
        <begin position="1977"/>
        <end position="1981"/>
    </location>
</feature>
<feature type="helix" evidence="39">
    <location>
        <begin position="1983"/>
        <end position="1986"/>
    </location>
</feature>
<feature type="turn" evidence="39">
    <location>
        <begin position="1987"/>
        <end position="1990"/>
    </location>
</feature>
<feature type="strand" evidence="39">
    <location>
        <begin position="1993"/>
        <end position="1998"/>
    </location>
</feature>
<feature type="helix" evidence="39">
    <location>
        <begin position="1999"/>
        <end position="2010"/>
    </location>
</feature>
<feature type="helix" evidence="39">
    <location>
        <begin position="2045"/>
        <end position="2050"/>
    </location>
</feature>
<feature type="strand" evidence="39">
    <location>
        <begin position="2055"/>
        <end position="2057"/>
    </location>
</feature>
<feature type="strand" evidence="39">
    <location>
        <begin position="2072"/>
        <end position="2075"/>
    </location>
</feature>
<feature type="strand" evidence="39">
    <location>
        <begin position="2082"/>
        <end position="2089"/>
    </location>
</feature>
<feature type="strand" evidence="39">
    <location>
        <begin position="2092"/>
        <end position="2099"/>
    </location>
</feature>
<feature type="strand" evidence="39">
    <location>
        <begin position="2104"/>
        <end position="2108"/>
    </location>
</feature>
<feature type="strand" evidence="39">
    <location>
        <begin position="2120"/>
        <end position="2124"/>
    </location>
</feature>
<feature type="helix" evidence="39">
    <location>
        <begin position="2131"/>
        <end position="2147"/>
    </location>
</feature>
<feature type="strand" evidence="39">
    <location>
        <begin position="2151"/>
        <end position="2154"/>
    </location>
</feature>
<feature type="helix" evidence="39">
    <location>
        <begin position="2164"/>
        <end position="2168"/>
    </location>
</feature>
<feature type="helix" evidence="39">
    <location>
        <begin position="2171"/>
        <end position="2183"/>
    </location>
</feature>
<feature type="strand" evidence="39">
    <location>
        <begin position="2189"/>
        <end position="2193"/>
    </location>
</feature>
<feature type="strand" evidence="39">
    <location>
        <begin position="2198"/>
        <end position="2200"/>
    </location>
</feature>
<feature type="helix" evidence="39">
    <location>
        <begin position="2201"/>
        <end position="2205"/>
    </location>
</feature>
<feature type="helix" evidence="39">
    <location>
        <begin position="2209"/>
        <end position="2211"/>
    </location>
</feature>
<feature type="turn" evidence="39">
    <location>
        <begin position="2213"/>
        <end position="2215"/>
    </location>
</feature>
<feature type="strand" evidence="39">
    <location>
        <begin position="2216"/>
        <end position="2221"/>
    </location>
</feature>
<feature type="strand" evidence="39">
    <location>
        <begin position="2225"/>
        <end position="2229"/>
    </location>
</feature>
<feature type="helix" evidence="39">
    <location>
        <begin position="2231"/>
        <end position="2238"/>
    </location>
</feature>
<feature type="helix" evidence="39">
    <location>
        <begin position="2241"/>
        <end position="2251"/>
    </location>
</feature>
<feature type="helix" evidence="39">
    <location>
        <begin position="2253"/>
        <end position="2261"/>
    </location>
</feature>
<feature type="helix" evidence="39">
    <location>
        <begin position="2269"/>
        <end position="2299"/>
    </location>
</feature>
<feature type="helix" evidence="39">
    <location>
        <begin position="2300"/>
        <end position="2302"/>
    </location>
</feature>
<feature type="helix" evidence="39">
    <location>
        <begin position="2304"/>
        <end position="2309"/>
    </location>
</feature>
<feature type="strand" evidence="39">
    <location>
        <begin position="2312"/>
        <end position="2317"/>
    </location>
</feature>
<feature type="helix" evidence="39">
    <location>
        <begin position="2319"/>
        <end position="2321"/>
    </location>
</feature>
<feature type="helix" evidence="39">
    <location>
        <begin position="2322"/>
        <end position="2344"/>
    </location>
</feature>
<feature type="helix" evidence="36">
    <location>
        <begin position="2345"/>
        <end position="2348"/>
    </location>
</feature>
<feature type="helix" evidence="39">
    <location>
        <begin position="2352"/>
        <end position="2365"/>
    </location>
</feature>
<feature type="helix" evidence="39">
    <location>
        <begin position="2369"/>
        <end position="2376"/>
    </location>
</feature>
<feature type="helix" evidence="39">
    <location>
        <begin position="2378"/>
        <end position="2388"/>
    </location>
</feature>
<feature type="helix" evidence="39">
    <location>
        <begin position="2404"/>
        <end position="2420"/>
    </location>
</feature>
<feature type="turn" evidence="36">
    <location>
        <begin position="2423"/>
        <end position="2425"/>
    </location>
</feature>
<feature type="helix" evidence="36">
    <location>
        <begin position="2426"/>
        <end position="2435"/>
    </location>
</feature>
<feature type="helix" evidence="36">
    <location>
        <begin position="2439"/>
        <end position="2448"/>
    </location>
</feature>
<reference key="1">
    <citation type="journal article" date="1997" name="J. Biol. Chem.">
        <title>Human acetyl-CoA carboxylase 2. Molecular cloning, characterization, chromosomal mapping, and evidence for two isoforms.</title>
        <authorList>
            <person name="Abu-Elheiga L."/>
            <person name="Almarza-Ortega D.B."/>
            <person name="Baldini A."/>
            <person name="Wakil S.J."/>
        </authorList>
    </citation>
    <scope>NUCLEOTIDE SEQUENCE [MRNA] (ISOFORMS 1 AND 2)</scope>
    <scope>TISSUE SPECIFICITY</scope>
    <source>
        <tissue>Liver</tissue>
    </source>
</reference>
<reference key="2">
    <citation type="journal article" date="2007" name="Protein Expr. Purif.">
        <title>Expression, purification, and characterization of human and rat acetyl coenzyme A carboxylase (ACC) isozymes.</title>
        <authorList>
            <person name="Cheng D."/>
            <person name="Chu C.-H."/>
            <person name="Chen L."/>
            <person name="Feder J.N."/>
            <person name="Mintier G.A."/>
            <person name="Wu Y."/>
            <person name="Cook J.W."/>
            <person name="Harpel M.R."/>
            <person name="Locke G.A."/>
            <person name="An Y."/>
            <person name="Tamura J.K."/>
        </authorList>
    </citation>
    <scope>NUCLEOTIDE SEQUENCE [MRNA] (ISOFORM 1)</scope>
    <scope>FUNCTION</scope>
    <scope>COFACTOR</scope>
    <scope>BIOPHYSICOCHEMICAL PROPERTIES</scope>
    <scope>CATALYTIC ACTIVITY</scope>
    <scope>ACTIVITY REGULATION</scope>
    <scope>VARIANT ILE-2141</scope>
</reference>
<reference key="3">
    <citation type="submission" date="2003-07" db="EMBL/GenBank/DDBJ databases">
        <title>Corrected sequence for human acetyl-CoA carboxylase 2 obtained by alignment to human genomic DNA and PCR cloning from human skeletal muscle and heart cDNA.</title>
        <authorList>
            <person name="Peng X.R."/>
            <person name="Lindgren K."/>
            <person name="Corneliussen B."/>
        </authorList>
    </citation>
    <scope>NUCLEOTIDE SEQUENCE [MRNA] (ISOFORM 1)</scope>
    <scope>VARIANT ILE-2141</scope>
    <source>
        <tissue>Heart</tissue>
    </source>
</reference>
<reference key="4">
    <citation type="submission" date="2003-09" db="EMBL/GenBank/DDBJ databases">
        <title>Alternative splicing in the human acetyl-CoA carboxylase 2 (ACC2) gene.</title>
        <authorList>
            <person name="Mao J."/>
            <person name="Wakil S.J."/>
        </authorList>
    </citation>
    <scope>NUCLEOTIDE SEQUENCE [MRNA] (ISOFORM 1)</scope>
    <source>
        <tissue>Heart</tissue>
    </source>
</reference>
<reference key="5">
    <citation type="journal article" date="2006" name="Nature">
        <title>The finished DNA sequence of human chromosome 12.</title>
        <authorList>
            <person name="Scherer S.E."/>
            <person name="Muzny D.M."/>
            <person name="Buhay C.J."/>
            <person name="Chen R."/>
            <person name="Cree A."/>
            <person name="Ding Y."/>
            <person name="Dugan-Rocha S."/>
            <person name="Gill R."/>
            <person name="Gunaratne P."/>
            <person name="Harris R.A."/>
            <person name="Hawes A.C."/>
            <person name="Hernandez J."/>
            <person name="Hodgson A.V."/>
            <person name="Hume J."/>
            <person name="Jackson A."/>
            <person name="Khan Z.M."/>
            <person name="Kovar-Smith C."/>
            <person name="Lewis L.R."/>
            <person name="Lozado R.J."/>
            <person name="Metzker M.L."/>
            <person name="Milosavljevic A."/>
            <person name="Miner G.R."/>
            <person name="Montgomery K.T."/>
            <person name="Morgan M.B."/>
            <person name="Nazareth L.V."/>
            <person name="Scott G."/>
            <person name="Sodergren E."/>
            <person name="Song X.-Z."/>
            <person name="Steffen D."/>
            <person name="Lovering R.C."/>
            <person name="Wheeler D.A."/>
            <person name="Worley K.C."/>
            <person name="Yuan Y."/>
            <person name="Zhang Z."/>
            <person name="Adams C.Q."/>
            <person name="Ansari-Lari M.A."/>
            <person name="Ayele M."/>
            <person name="Brown M.J."/>
            <person name="Chen G."/>
            <person name="Chen Z."/>
            <person name="Clerc-Blankenburg K.P."/>
            <person name="Davis C."/>
            <person name="Delgado O."/>
            <person name="Dinh H.H."/>
            <person name="Draper H."/>
            <person name="Gonzalez-Garay M.L."/>
            <person name="Havlak P."/>
            <person name="Jackson L.R."/>
            <person name="Jacob L.S."/>
            <person name="Kelly S.H."/>
            <person name="Li L."/>
            <person name="Li Z."/>
            <person name="Liu J."/>
            <person name="Liu W."/>
            <person name="Lu J."/>
            <person name="Maheshwari M."/>
            <person name="Nguyen B.-V."/>
            <person name="Okwuonu G.O."/>
            <person name="Pasternak S."/>
            <person name="Perez L.M."/>
            <person name="Plopper F.J.H."/>
            <person name="Santibanez J."/>
            <person name="Shen H."/>
            <person name="Tabor P.E."/>
            <person name="Verduzco D."/>
            <person name="Waldron L."/>
            <person name="Wang Q."/>
            <person name="Williams G.A."/>
            <person name="Zhang J."/>
            <person name="Zhou J."/>
            <person name="Allen C.C."/>
            <person name="Amin A.G."/>
            <person name="Anyalebechi V."/>
            <person name="Bailey M."/>
            <person name="Barbaria J.A."/>
            <person name="Bimage K.E."/>
            <person name="Bryant N.P."/>
            <person name="Burch P.E."/>
            <person name="Burkett C.E."/>
            <person name="Burrell K.L."/>
            <person name="Calderon E."/>
            <person name="Cardenas V."/>
            <person name="Carter K."/>
            <person name="Casias K."/>
            <person name="Cavazos I."/>
            <person name="Cavazos S.R."/>
            <person name="Ceasar H."/>
            <person name="Chacko J."/>
            <person name="Chan S.N."/>
            <person name="Chavez D."/>
            <person name="Christopoulos C."/>
            <person name="Chu J."/>
            <person name="Cockrell R."/>
            <person name="Cox C.D."/>
            <person name="Dang M."/>
            <person name="Dathorne S.R."/>
            <person name="David R."/>
            <person name="Davis C.M."/>
            <person name="Davy-Carroll L."/>
            <person name="Deshazo D.R."/>
            <person name="Donlin J.E."/>
            <person name="D'Souza L."/>
            <person name="Eaves K.A."/>
            <person name="Egan A."/>
            <person name="Emery-Cohen A.J."/>
            <person name="Escotto M."/>
            <person name="Flagg N."/>
            <person name="Forbes L.D."/>
            <person name="Gabisi A.M."/>
            <person name="Garza M."/>
            <person name="Hamilton C."/>
            <person name="Henderson N."/>
            <person name="Hernandez O."/>
            <person name="Hines S."/>
            <person name="Hogues M.E."/>
            <person name="Huang M."/>
            <person name="Idlebird D.G."/>
            <person name="Johnson R."/>
            <person name="Jolivet A."/>
            <person name="Jones S."/>
            <person name="Kagan R."/>
            <person name="King L.M."/>
            <person name="Leal B."/>
            <person name="Lebow H."/>
            <person name="Lee S."/>
            <person name="LeVan J.M."/>
            <person name="Lewis L.C."/>
            <person name="London P."/>
            <person name="Lorensuhewa L.M."/>
            <person name="Loulseged H."/>
            <person name="Lovett D.A."/>
            <person name="Lucier A."/>
            <person name="Lucier R.L."/>
            <person name="Ma J."/>
            <person name="Madu R.C."/>
            <person name="Mapua P."/>
            <person name="Martindale A.D."/>
            <person name="Martinez E."/>
            <person name="Massey E."/>
            <person name="Mawhiney S."/>
            <person name="Meador M.G."/>
            <person name="Mendez S."/>
            <person name="Mercado C."/>
            <person name="Mercado I.C."/>
            <person name="Merritt C.E."/>
            <person name="Miner Z.L."/>
            <person name="Minja E."/>
            <person name="Mitchell T."/>
            <person name="Mohabbat F."/>
            <person name="Mohabbat K."/>
            <person name="Montgomery B."/>
            <person name="Moore N."/>
            <person name="Morris S."/>
            <person name="Munidasa M."/>
            <person name="Ngo R.N."/>
            <person name="Nguyen N.B."/>
            <person name="Nickerson E."/>
            <person name="Nwaokelemeh O.O."/>
            <person name="Nwokenkwo S."/>
            <person name="Obregon M."/>
            <person name="Oguh M."/>
            <person name="Oragunye N."/>
            <person name="Oviedo R.J."/>
            <person name="Parish B.J."/>
            <person name="Parker D.N."/>
            <person name="Parrish J."/>
            <person name="Parks K.L."/>
            <person name="Paul H.A."/>
            <person name="Payton B.A."/>
            <person name="Perez A."/>
            <person name="Perrin W."/>
            <person name="Pickens A."/>
            <person name="Primus E.L."/>
            <person name="Pu L.-L."/>
            <person name="Puazo M."/>
            <person name="Quiles M.M."/>
            <person name="Quiroz J.B."/>
            <person name="Rabata D."/>
            <person name="Reeves K."/>
            <person name="Ruiz S.J."/>
            <person name="Shao H."/>
            <person name="Sisson I."/>
            <person name="Sonaike T."/>
            <person name="Sorelle R.P."/>
            <person name="Sutton A.E."/>
            <person name="Svatek A.F."/>
            <person name="Svetz L.A."/>
            <person name="Tamerisa K.S."/>
            <person name="Taylor T.R."/>
            <person name="Teague B."/>
            <person name="Thomas N."/>
            <person name="Thorn R.D."/>
            <person name="Trejos Z.Y."/>
            <person name="Trevino B.K."/>
            <person name="Ukegbu O.N."/>
            <person name="Urban J.B."/>
            <person name="Vasquez L.I."/>
            <person name="Vera V.A."/>
            <person name="Villasana D.M."/>
            <person name="Wang L."/>
            <person name="Ward-Moore S."/>
            <person name="Warren J.T."/>
            <person name="Wei X."/>
            <person name="White F."/>
            <person name="Williamson A.L."/>
            <person name="Wleczyk R."/>
            <person name="Wooden H.S."/>
            <person name="Wooden S.H."/>
            <person name="Yen J."/>
            <person name="Yoon L."/>
            <person name="Yoon V."/>
            <person name="Zorrilla S.E."/>
            <person name="Nelson D."/>
            <person name="Kucherlapati R."/>
            <person name="Weinstock G."/>
            <person name="Gibbs R.A."/>
        </authorList>
    </citation>
    <scope>NUCLEOTIDE SEQUENCE [LARGE SCALE GENOMIC DNA]</scope>
</reference>
<reference key="6">
    <citation type="journal article" date="1996" name="Biochem. J.">
        <title>Identification of a second human acetyl-CoA carboxylase gene.</title>
        <authorList>
            <person name="Widmer J."/>
            <person name="Fassihi K.S."/>
            <person name="Schlichter S.C."/>
            <person name="Wheeler K.S."/>
            <person name="Crute B.E."/>
            <person name="King N."/>
            <person name="Nutile-Mcmenemy N."/>
            <person name="Noll W.W."/>
            <person name="Daniel S."/>
            <person name="Ha J."/>
            <person name="Kim K.-H."/>
            <person name="Witters L.A."/>
        </authorList>
    </citation>
    <scope>NUCLEOTIDE SEQUENCE [MRNA] OF 1324-2109</scope>
    <source>
        <tissue>Adipose tissue</tissue>
    </source>
</reference>
<reference key="7">
    <citation type="journal article" date="2000" name="Proc. Natl. Acad. Sci. U.S.A.">
        <title>The subcellular localization of acetyl-CoA carboxylase 2.</title>
        <authorList>
            <person name="Abu-Elheiga L."/>
            <person name="Brinkley W.R."/>
            <person name="Zhong L."/>
            <person name="Chirala S.S."/>
            <person name="Woldegiorgis G."/>
            <person name="Wakil S.J."/>
        </authorList>
    </citation>
    <scope>SUBCELLULAR LOCATION</scope>
</reference>
<reference key="8">
    <citation type="journal article" date="2003" name="Am. J. Physiol.">
        <title>Regulation of 5'AMP-activated protein kinase activity and substrate utilization in exercising human skeletal muscle.</title>
        <authorList>
            <person name="Wojtaszewski J.F."/>
            <person name="MacDonald C."/>
            <person name="Nielsen J.N."/>
            <person name="Hellsten Y."/>
            <person name="Hardie D.G."/>
            <person name="Kemp B.E."/>
            <person name="Kiens B."/>
            <person name="Richter E.A."/>
        </authorList>
    </citation>
    <scope>PHOSPHORYLATION AT SER-222 BY AMPK</scope>
    <scope>ACTIVITY REGULATION</scope>
</reference>
<reference key="9">
    <citation type="journal article" date="2008" name="Proc. Natl. Acad. Sci. U.S.A.">
        <title>A quantitative atlas of mitotic phosphorylation.</title>
        <authorList>
            <person name="Dephoure N."/>
            <person name="Zhou C."/>
            <person name="Villen J."/>
            <person name="Beausoleil S.A."/>
            <person name="Bakalarski C.E."/>
            <person name="Elledge S.J."/>
            <person name="Gygi S.P."/>
        </authorList>
    </citation>
    <scope>IDENTIFICATION BY MASS SPECTROMETRY [LARGE SCALE ANALYSIS]</scope>
    <source>
        <tissue>Cervix carcinoma</tissue>
    </source>
</reference>
<reference key="10">
    <citation type="journal article" date="2009" name="Biochim. Biophys. Acta">
        <title>Characterization of recombinant human acetyl-CoA carboxylase-2 steady-state kinetics.</title>
        <authorList>
            <person name="Kaushik V.K."/>
            <person name="Kavana M."/>
            <person name="Volz J.M."/>
            <person name="Weldon S.C."/>
            <person name="Hanrahan S."/>
            <person name="Xu J."/>
            <person name="Caplan S.L."/>
            <person name="Hubbard B.K."/>
        </authorList>
    </citation>
    <scope>BIOPHYSICOCHEMICAL PROPERTIES</scope>
    <scope>CATALYTIC ACTIVITY</scope>
    <scope>FUNCTION</scope>
</reference>
<reference key="11">
    <citation type="journal article" date="2009" name="PLoS ONE">
        <title>ACC2 is expressed at high levels in human white adipose and has an isoform with a novel N-terminus.</title>
        <authorList>
            <person name="Castle J.C."/>
            <person name="Hara Y."/>
            <person name="Raymond C.K."/>
            <person name="Garrett-Engele P."/>
            <person name="Ohwaki K."/>
            <person name="Kan Z."/>
            <person name="Kusunoki J."/>
            <person name="Johnson J.M."/>
        </authorList>
    </citation>
    <scope>BIOPHYSICOCHEMICAL PROPERTIES</scope>
    <scope>ALTERNATIVE SPLICING (ISOFORM 3)</scope>
    <scope>TISSUE SPECIFICITY</scope>
</reference>
<reference key="12">
    <citation type="journal article" date="2010" name="Proc. Natl. Acad. Sci. U.S.A.">
        <title>Induced polymerization of mammalian acetyl-CoA carboxylase by MIG12 provides a tertiary level of regulation of fatty acid synthesis.</title>
        <authorList>
            <person name="Kim C.W."/>
            <person name="Moon Y.A."/>
            <person name="Park S.W."/>
            <person name="Cheng D."/>
            <person name="Kwon H.J."/>
            <person name="Horton J.D."/>
        </authorList>
    </citation>
    <scope>FUNCTION</scope>
    <scope>CATALYTIC ACTIVITY</scope>
    <scope>ACTIVITY REGULATION</scope>
    <scope>SUBUNIT</scope>
    <scope>INTERACTION WITH MID1IP1</scope>
</reference>
<reference key="13">
    <citation type="journal article" date="2010" name="Proc. Natl. Acad. Sci. U.S.A.">
        <title>Crystal structure of Spot 14, a modulator of fatty acid synthesis.</title>
        <authorList>
            <person name="Colbert C.L."/>
            <person name="Kim C.W."/>
            <person name="Moon Y.A."/>
            <person name="Henry L."/>
            <person name="Palnitkar M."/>
            <person name="McKean W.B."/>
            <person name="Fitzgerald K."/>
            <person name="Deisenhofer J."/>
            <person name="Horton J.D."/>
            <person name="Kwon H.J."/>
        </authorList>
    </citation>
    <scope>CATALYTIC ACTIVITY</scope>
    <scope>SUBUNIT</scope>
    <scope>ACTIVITY REGULATION</scope>
    <scope>INTERACTION WITH MID1IP1</scope>
</reference>
<reference key="14">
    <citation type="journal article" date="2014" name="J. Proteomics">
        <title>An enzyme assisted RP-RPLC approach for in-depth analysis of human liver phosphoproteome.</title>
        <authorList>
            <person name="Bian Y."/>
            <person name="Song C."/>
            <person name="Cheng K."/>
            <person name="Dong M."/>
            <person name="Wang F."/>
            <person name="Huang J."/>
            <person name="Sun D."/>
            <person name="Wang L."/>
            <person name="Ye M."/>
            <person name="Zou H."/>
        </authorList>
    </citation>
    <scope>PHOSPHORYLATION [LARGE SCALE ANALYSIS] AT SER-35; THR-70; SER-91; SER-95; SER-200; SER-469 AND THR-1342</scope>
    <scope>IDENTIFICATION BY MASS SPECTROMETRY [LARGE SCALE ANALYSIS]</scope>
    <source>
        <tissue>Liver</tissue>
    </source>
</reference>
<reference key="15">
    <citation type="journal article" date="2008" name="Proteins">
        <title>Crystal structure of the biotin carboxylase domain of human acetyl-CoA carboxylase 2.</title>
        <authorList>
            <person name="Cho Y.S."/>
            <person name="Lee J.I."/>
            <person name="Shin D."/>
            <person name="Kim H.T."/>
            <person name="Cheon Y.H."/>
            <person name="Seo C.I."/>
            <person name="Kim Y.E."/>
            <person name="Hyun Y.L."/>
            <person name="Lee Y.S."/>
            <person name="Sugiyama K."/>
            <person name="Park S.Y."/>
            <person name="Ro S."/>
            <person name="Cho J.M."/>
            <person name="Lee T.G."/>
            <person name="Heo Y.S."/>
        </authorList>
    </citation>
    <scope>X-RAY CRYSTALLOGRAPHY (2.5 ANGSTROMS) OF 217-775</scope>
</reference>
<reference key="16">
    <citation type="submission" date="2006-10" db="PDB data bank">
        <title>Solution structure of RSGI RUH-053, an apo-biotin carboxy carrier protein from human transcarboxylase.</title>
        <authorList>
            <consortium name="RIKEN structural genomics initiative (RSGI)"/>
        </authorList>
    </citation>
    <scope>STRUCTURE BY NMR OF 885-971</scope>
</reference>
<reference key="17">
    <citation type="journal article" date="2008" name="Proteins">
        <title>Biotinoyl domain of human acetyl-CoA carboxylase: Structural insights into the carboxyl transfer mechanism.</title>
        <authorList>
            <person name="Lee C.K."/>
            <person name="Cheong H.K."/>
            <person name="Ryu K.S."/>
            <person name="Lee J.I."/>
            <person name="Lee W."/>
            <person name="Jeon Y.H."/>
            <person name="Cheong C."/>
        </authorList>
    </citation>
    <scope>STRUCTURE BY NMR OF 891-965</scope>
    <scope>BIOTINYLATION AT LYS-929</scope>
    <scope>COFACTOR</scope>
    <scope>DOMAIN</scope>
</reference>
<reference key="18">
    <citation type="journal article" date="2009" name="Acta Crystallogr. D">
        <title>The human ACC2 CT-domain C-terminus is required for full functionality and has a novel twist.</title>
        <authorList>
            <person name="Madauss K.P."/>
            <person name="Burkhart W.A."/>
            <person name="Consler T.G."/>
            <person name="Cowan D.J."/>
            <person name="Gottschalk W.K."/>
            <person name="Miller A.B."/>
            <person name="Short S.A."/>
            <person name="Tran T.B."/>
            <person name="Williams S.P."/>
        </authorList>
    </citation>
    <scope>X-RAY CRYSTALLOGRAPHY (3.19 ANGSTROMS) OF 1693-2450 IN COMPLEX WITH INHIBITOR</scope>
    <scope>DOMAIN</scope>
</reference>
<reference key="19">
    <citation type="journal article" date="2010" name="Biochem. Biophys. Res. Commun.">
        <title>Molecular mechanism for the regulation of human ACC2 through phosphorylation by AMPK.</title>
        <authorList>
            <person name="Cho Y.S."/>
            <person name="Lee J.I."/>
            <person name="Shin D."/>
            <person name="Kim H.T."/>
            <person name="Jung H.Y."/>
            <person name="Lee T.G."/>
            <person name="Kang L.W."/>
            <person name="Ahn Y.J."/>
            <person name="Cho H.S."/>
            <person name="Heo Y.S."/>
        </authorList>
    </citation>
    <scope>X-RAY CRYSTALLOGRAPHY (2.50 ANGSTROMS) OF 217-775 IN COMPLEX WITH SORAPHEN A</scope>
    <scope>FUNCTION</scope>
    <scope>CATALYTIC ACTIVITY</scope>
    <scope>ACTIVITY REGULATION</scope>
    <scope>PATHWAY</scope>
    <scope>SUBUNIT</scope>
    <scope>PHOSPHORYLATION AT SER-222</scope>
    <scope>MUTAGENESIS OF ARG-277 AND GLU-671</scope>
</reference>
<reference key="20">
    <citation type="journal article" date="2016" name="Proc. Natl. Acad. Sci. U.S.A.">
        <title>Acetyl-CoA carboxylase inhibition by ND-630 reduces hepatic steatosis, improves insulin sensitivity, and modulates dyslipidemia in rats.</title>
        <authorList>
            <person name="Harriman G."/>
            <person name="Greenwood J."/>
            <person name="Bhat S."/>
            <person name="Huang X."/>
            <person name="Wang R."/>
            <person name="Paul D."/>
            <person name="Tong L."/>
            <person name="Saha A.K."/>
            <person name="Westlin W.F."/>
            <person name="Kapeller R."/>
            <person name="Harwood H.J. Jr."/>
        </authorList>
    </citation>
    <scope>X-RAY CRYSTALLOGRAPHY (2.60 ANGSTROMS) OF 238-760 IN COMPLEX WITH INHIBITOR</scope>
    <scope>FUNCTION</scope>
    <scope>CATALYTIC ACTIVITY</scope>
    <scope>PATHWAY</scope>
</reference>
<reference key="21">
    <citation type="journal article" date="2008" name="Science">
        <title>Core signaling pathways in human pancreatic cancers revealed by global genomic analyses.</title>
        <authorList>
            <person name="Jones S."/>
            <person name="Zhang X."/>
            <person name="Parsons D.W."/>
            <person name="Lin J.C."/>
            <person name="Leary R.J."/>
            <person name="Angenendt P."/>
            <person name="Mankoo P."/>
            <person name="Carter H."/>
            <person name="Kamiyama H."/>
            <person name="Jimeno A."/>
            <person name="Hong S.M."/>
            <person name="Fu B."/>
            <person name="Lin M.T."/>
            <person name="Calhoun E.S."/>
            <person name="Kamiyama M."/>
            <person name="Walter K."/>
            <person name="Nikolskaya T."/>
            <person name="Nikolsky Y."/>
            <person name="Hartigan J."/>
            <person name="Smith D.R."/>
            <person name="Hidalgo M."/>
            <person name="Leach S.D."/>
            <person name="Klein A.P."/>
            <person name="Jaffee E.M."/>
            <person name="Goggins M."/>
            <person name="Maitra A."/>
            <person name="Iacobuzio-Donahue C."/>
            <person name="Eshleman J.R."/>
            <person name="Kern S.E."/>
            <person name="Hruban R.H."/>
            <person name="Karchin R."/>
            <person name="Papadopoulos N."/>
            <person name="Parmigiani G."/>
            <person name="Vogelstein B."/>
            <person name="Velculescu V.E."/>
            <person name="Kinzler K.W."/>
        </authorList>
    </citation>
    <scope>VARIANT [LARGE SCALE ANALYSIS] LEU-193</scope>
</reference>
<name>ACACB_HUMAN</name>
<proteinExistence type="evidence at protein level"/>
<gene>
    <name evidence="31" type="primary">ACACB</name>
    <name type="synonym">ACC2</name>
    <name type="synonym">ACCB</name>
</gene>
<dbReference type="EC" id="6.4.1.2" evidence="14 18 19 20 21 22"/>
<dbReference type="EMBL" id="U89344">
    <property type="protein sequence ID" value="AAB58382.1"/>
    <property type="status" value="ALT_SEQ"/>
    <property type="molecule type" value="mRNA"/>
</dbReference>
<dbReference type="EMBL" id="DQ493870">
    <property type="protein sequence ID" value="ABF48723.1"/>
    <property type="molecule type" value="mRNA"/>
</dbReference>
<dbReference type="EMBL" id="AJ575431">
    <property type="protein sequence ID" value="CAE01470.2"/>
    <property type="status" value="ALT_SEQ"/>
    <property type="molecule type" value="mRNA"/>
</dbReference>
<dbReference type="EMBL" id="AJ575592">
    <property type="protein sequence ID" value="CAE01471.3"/>
    <property type="molecule type" value="mRNA"/>
</dbReference>
<dbReference type="EMBL" id="AY382667">
    <property type="protein sequence ID" value="AAR37018.1"/>
    <property type="molecule type" value="mRNA"/>
</dbReference>
<dbReference type="EMBL" id="AC007637">
    <property type="status" value="NOT_ANNOTATED_CDS"/>
    <property type="molecule type" value="Genomic_DNA"/>
</dbReference>
<dbReference type="EMBL" id="U34591">
    <property type="protein sequence ID" value="AAC50571.1"/>
    <property type="molecule type" value="mRNA"/>
</dbReference>
<dbReference type="CCDS" id="CCDS31898.1">
    <molecule id="O00763-1"/>
</dbReference>
<dbReference type="PIR" id="S71091">
    <property type="entry name" value="S71091"/>
</dbReference>
<dbReference type="RefSeq" id="NP_001084.3">
    <molecule id="O00763-1"/>
    <property type="nucleotide sequence ID" value="NM_001093.4"/>
</dbReference>
<dbReference type="RefSeq" id="NP_001399663.1">
    <molecule id="O00763-1"/>
    <property type="nucleotide sequence ID" value="NM_001412734.1"/>
</dbReference>
<dbReference type="RefSeq" id="NP_001399664.1">
    <molecule id="O00763-1"/>
    <property type="nucleotide sequence ID" value="NM_001412735.1"/>
</dbReference>
<dbReference type="RefSeq" id="NP_001399665.1">
    <molecule id="O00763-3"/>
    <property type="nucleotide sequence ID" value="NM_001412736.1"/>
</dbReference>
<dbReference type="RefSeq" id="XP_005253933.1">
    <property type="nucleotide sequence ID" value="XM_005253876.4"/>
</dbReference>
<dbReference type="RefSeq" id="XP_006719430.1">
    <property type="nucleotide sequence ID" value="XM_006719367.3"/>
</dbReference>
<dbReference type="RefSeq" id="XP_011536561.1">
    <property type="nucleotide sequence ID" value="XM_011538259.2"/>
</dbReference>
<dbReference type="PDB" id="2DN8">
    <property type="method" value="NMR"/>
    <property type="chains" value="A=885-971"/>
</dbReference>
<dbReference type="PDB" id="2HJW">
    <property type="method" value="X-ray"/>
    <property type="resolution" value="2.50 A"/>
    <property type="chains" value="A=217-775"/>
</dbReference>
<dbReference type="PDB" id="2KCC">
    <property type="method" value="NMR"/>
    <property type="chains" value="A=891-965"/>
</dbReference>
<dbReference type="PDB" id="3FF6">
    <property type="method" value="X-ray"/>
    <property type="resolution" value="3.19 A"/>
    <property type="chains" value="A/B/C/D=1693-2450"/>
</dbReference>
<dbReference type="PDB" id="3GID">
    <property type="method" value="X-ray"/>
    <property type="resolution" value="2.30 A"/>
    <property type="chains" value="A/B=238-760"/>
</dbReference>
<dbReference type="PDB" id="3GLK">
    <property type="method" value="X-ray"/>
    <property type="resolution" value="2.10 A"/>
    <property type="chains" value="A=238-760"/>
</dbReference>
<dbReference type="PDB" id="3JRW">
    <property type="method" value="X-ray"/>
    <property type="resolution" value="2.60 A"/>
    <property type="chains" value="A=217-775"/>
</dbReference>
<dbReference type="PDB" id="3JRX">
    <property type="method" value="X-ray"/>
    <property type="resolution" value="2.50 A"/>
    <property type="chains" value="A=217-775"/>
</dbReference>
<dbReference type="PDB" id="3TDC">
    <property type="method" value="X-ray"/>
    <property type="resolution" value="2.41 A"/>
    <property type="chains" value="A=1690-2445"/>
</dbReference>
<dbReference type="PDB" id="4HQ6">
    <property type="method" value="X-ray"/>
    <property type="resolution" value="2.70 A"/>
    <property type="chains" value="A=217-776"/>
</dbReference>
<dbReference type="PDB" id="5KKN">
    <property type="method" value="X-ray"/>
    <property type="resolution" value="2.60 A"/>
    <property type="chains" value="B/C=238-760"/>
</dbReference>
<dbReference type="PDBsum" id="2DN8"/>
<dbReference type="PDBsum" id="2HJW"/>
<dbReference type="PDBsum" id="2KCC"/>
<dbReference type="PDBsum" id="3FF6"/>
<dbReference type="PDBsum" id="3GID"/>
<dbReference type="PDBsum" id="3GLK"/>
<dbReference type="PDBsum" id="3JRW"/>
<dbReference type="PDBsum" id="3JRX"/>
<dbReference type="PDBsum" id="3TDC"/>
<dbReference type="PDBsum" id="4HQ6"/>
<dbReference type="PDBsum" id="5KKN"/>
<dbReference type="SMR" id="O00763"/>
<dbReference type="BioGRID" id="106550">
    <property type="interactions" value="172"/>
</dbReference>
<dbReference type="DIP" id="DIP-51617N"/>
<dbReference type="FunCoup" id="O00763">
    <property type="interactions" value="2599"/>
</dbReference>
<dbReference type="IntAct" id="O00763">
    <property type="interactions" value="66"/>
</dbReference>
<dbReference type="MINT" id="O00763"/>
<dbReference type="STRING" id="9606.ENSP00000341044"/>
<dbReference type="BindingDB" id="O00763"/>
<dbReference type="ChEMBL" id="CHEMBL4829"/>
<dbReference type="DrugBank" id="DB03781">
    <property type="generic name" value="2-[4-(2,4-Dichlorophenoxy)Phenoxy]Propanoic Acid"/>
</dbReference>
<dbReference type="DrugBank" id="DB00173">
    <property type="generic name" value="Adenine"/>
</dbReference>
<dbReference type="DrugBank" id="DB00121">
    <property type="generic name" value="Biotin"/>
</dbReference>
<dbReference type="DrugBank" id="DB07870">
    <property type="generic name" value="Haloxyfop-P"/>
</dbReference>
<dbReference type="DrugBank" id="DB00331">
    <property type="generic name" value="Metformin"/>
</dbReference>
<dbReference type="DrugBank" id="DB12096">
    <property type="generic name" value="PF-05175157"/>
</dbReference>
<dbReference type="DrugBank" id="DB02859">
    <property type="generic name" value="Soraphen A"/>
</dbReference>
<dbReference type="GuidetoPHARMACOLOGY" id="1264"/>
<dbReference type="SwissLipids" id="SLP:000000730"/>
<dbReference type="GlyGen" id="O00763">
    <property type="glycosylation" value="1 site, 1 O-linked glycan (1 site)"/>
</dbReference>
<dbReference type="iPTMnet" id="O00763"/>
<dbReference type="PhosphoSitePlus" id="O00763"/>
<dbReference type="BioMuta" id="ACACB"/>
<dbReference type="jPOST" id="O00763"/>
<dbReference type="MassIVE" id="O00763"/>
<dbReference type="PaxDb" id="9606-ENSP00000341044"/>
<dbReference type="PeptideAtlas" id="O00763"/>
<dbReference type="ProteomicsDB" id="48022">
    <molecule id="O00763-1"/>
</dbReference>
<dbReference type="ProteomicsDB" id="48023">
    <molecule id="O00763-2"/>
</dbReference>
<dbReference type="Antibodypedia" id="1321">
    <property type="antibodies" value="160 antibodies from 29 providers"/>
</dbReference>
<dbReference type="DNASU" id="32"/>
<dbReference type="Ensembl" id="ENST00000338432.12">
    <molecule id="O00763-1"/>
    <property type="protein sequence ID" value="ENSP00000341044.7"/>
    <property type="gene ID" value="ENSG00000076555.16"/>
</dbReference>
<dbReference type="Ensembl" id="ENST00000377848.7">
    <molecule id="O00763-1"/>
    <property type="protein sequence ID" value="ENSP00000367079.3"/>
    <property type="gene ID" value="ENSG00000076555.16"/>
</dbReference>
<dbReference type="GeneID" id="32"/>
<dbReference type="KEGG" id="hsa:32"/>
<dbReference type="MANE-Select" id="ENST00000338432.12">
    <property type="protein sequence ID" value="ENSP00000341044.7"/>
    <property type="RefSeq nucleotide sequence ID" value="NM_001093.4"/>
    <property type="RefSeq protein sequence ID" value="NP_001084.3"/>
</dbReference>
<dbReference type="UCSC" id="uc001tob.4">
    <molecule id="O00763-1"/>
    <property type="organism name" value="human"/>
</dbReference>
<dbReference type="AGR" id="HGNC:85"/>
<dbReference type="CTD" id="32"/>
<dbReference type="DisGeNET" id="32"/>
<dbReference type="GeneCards" id="ACACB"/>
<dbReference type="HGNC" id="HGNC:85">
    <property type="gene designation" value="ACACB"/>
</dbReference>
<dbReference type="HPA" id="ENSG00000076555">
    <property type="expression patterns" value="Tissue enhanced (adipose tissue, skeletal muscle)"/>
</dbReference>
<dbReference type="MalaCards" id="ACACB"/>
<dbReference type="MIM" id="601557">
    <property type="type" value="gene"/>
</dbReference>
<dbReference type="neXtProt" id="NX_O00763"/>
<dbReference type="OpenTargets" id="ENSG00000076555"/>
<dbReference type="PharmGKB" id="PA24422"/>
<dbReference type="VEuPathDB" id="HostDB:ENSG00000076555"/>
<dbReference type="eggNOG" id="KOG0368">
    <property type="taxonomic scope" value="Eukaryota"/>
</dbReference>
<dbReference type="GeneTree" id="ENSGT00940000155049"/>
<dbReference type="HOGENOM" id="CLU_000395_5_0_1"/>
<dbReference type="InParanoid" id="O00763"/>
<dbReference type="OMA" id="TEHCKVA"/>
<dbReference type="OrthoDB" id="14612at2759"/>
<dbReference type="PAN-GO" id="O00763">
    <property type="GO annotations" value="3 GO annotations based on evolutionary models"/>
</dbReference>
<dbReference type="PhylomeDB" id="O00763"/>
<dbReference type="TreeFam" id="TF300061"/>
<dbReference type="BioCyc" id="MetaCyc:HS01211-MONOMER"/>
<dbReference type="BRENDA" id="6.3.4.14">
    <property type="organism ID" value="2681"/>
</dbReference>
<dbReference type="BRENDA" id="6.4.1.2">
    <property type="organism ID" value="2681"/>
</dbReference>
<dbReference type="PathwayCommons" id="O00763"/>
<dbReference type="Reactome" id="R-HSA-163765">
    <property type="pathway name" value="ChREBP activates metabolic gene expression"/>
</dbReference>
<dbReference type="Reactome" id="R-HSA-196780">
    <property type="pathway name" value="Biotin transport and metabolism"/>
</dbReference>
<dbReference type="Reactome" id="R-HSA-200425">
    <property type="pathway name" value="Carnitine shuttle"/>
</dbReference>
<dbReference type="Reactome" id="R-HSA-2426168">
    <property type="pathway name" value="Activation of gene expression by SREBF (SREBP)"/>
</dbReference>
<dbReference type="SABIO-RK" id="O00763"/>
<dbReference type="SignaLink" id="O00763"/>
<dbReference type="SIGNOR" id="O00763"/>
<dbReference type="UniPathway" id="UPA00655">
    <property type="reaction ID" value="UER00711"/>
</dbReference>
<dbReference type="BioGRID-ORCS" id="32">
    <property type="hits" value="8 hits in 1154 CRISPR screens"/>
</dbReference>
<dbReference type="ChiTaRS" id="ACACB">
    <property type="organism name" value="human"/>
</dbReference>
<dbReference type="EvolutionaryTrace" id="O00763"/>
<dbReference type="GeneWiki" id="ACACB"/>
<dbReference type="GenomeRNAi" id="32"/>
<dbReference type="Pharos" id="O00763">
    <property type="development level" value="Tchem"/>
</dbReference>
<dbReference type="PRO" id="PR:O00763"/>
<dbReference type="Proteomes" id="UP000005640">
    <property type="component" value="Chromosome 12"/>
</dbReference>
<dbReference type="RNAct" id="O00763">
    <property type="molecule type" value="protein"/>
</dbReference>
<dbReference type="Bgee" id="ENSG00000076555">
    <property type="expression patterns" value="Expressed in tendon of biceps brachii and 208 other cell types or tissues"/>
</dbReference>
<dbReference type="ExpressionAtlas" id="O00763">
    <property type="expression patterns" value="baseline and differential"/>
</dbReference>
<dbReference type="GO" id="GO:0005829">
    <property type="term" value="C:cytosol"/>
    <property type="evidence" value="ECO:0000304"/>
    <property type="project" value="Reactome"/>
</dbReference>
<dbReference type="GO" id="GO:0016507">
    <property type="term" value="C:mitochondrial fatty acid beta-oxidation multienzyme complex"/>
    <property type="evidence" value="ECO:0007669"/>
    <property type="project" value="Ensembl"/>
</dbReference>
<dbReference type="GO" id="GO:0005741">
    <property type="term" value="C:mitochondrial outer membrane"/>
    <property type="evidence" value="ECO:0000304"/>
    <property type="project" value="Reactome"/>
</dbReference>
<dbReference type="GO" id="GO:0005739">
    <property type="term" value="C:mitochondrion"/>
    <property type="evidence" value="ECO:0000314"/>
    <property type="project" value="UniProtKB"/>
</dbReference>
<dbReference type="GO" id="GO:0005634">
    <property type="term" value="C:nucleus"/>
    <property type="evidence" value="ECO:0000314"/>
    <property type="project" value="UniProtKB"/>
</dbReference>
<dbReference type="GO" id="GO:0003989">
    <property type="term" value="F:acetyl-CoA carboxylase activity"/>
    <property type="evidence" value="ECO:0000314"/>
    <property type="project" value="UniProtKB"/>
</dbReference>
<dbReference type="GO" id="GO:0005524">
    <property type="term" value="F:ATP binding"/>
    <property type="evidence" value="ECO:0007669"/>
    <property type="project" value="UniProtKB-KW"/>
</dbReference>
<dbReference type="GO" id="GO:0009374">
    <property type="term" value="F:biotin binding"/>
    <property type="evidence" value="ECO:0007669"/>
    <property type="project" value="Ensembl"/>
</dbReference>
<dbReference type="GO" id="GO:0042802">
    <property type="term" value="F:identical protein binding"/>
    <property type="evidence" value="ECO:0000353"/>
    <property type="project" value="IntAct"/>
</dbReference>
<dbReference type="GO" id="GO:0046872">
    <property type="term" value="F:metal ion binding"/>
    <property type="evidence" value="ECO:0007669"/>
    <property type="project" value="UniProtKB-KW"/>
</dbReference>
<dbReference type="GO" id="GO:0006084">
    <property type="term" value="P:acetyl-CoA metabolic process"/>
    <property type="evidence" value="ECO:0000314"/>
    <property type="project" value="UniProtKB"/>
</dbReference>
<dbReference type="GO" id="GO:0046323">
    <property type="term" value="P:D-glucose import"/>
    <property type="evidence" value="ECO:0007669"/>
    <property type="project" value="Ensembl"/>
</dbReference>
<dbReference type="GO" id="GO:0097009">
    <property type="term" value="P:energy homeostasis"/>
    <property type="evidence" value="ECO:0007669"/>
    <property type="project" value="Ensembl"/>
</dbReference>
<dbReference type="GO" id="GO:0006633">
    <property type="term" value="P:fatty acid biosynthetic process"/>
    <property type="evidence" value="ECO:0000318"/>
    <property type="project" value="GO_Central"/>
</dbReference>
<dbReference type="GO" id="GO:0055089">
    <property type="term" value="P:fatty acid homeostasis"/>
    <property type="evidence" value="ECO:0000304"/>
    <property type="project" value="Reactome"/>
</dbReference>
<dbReference type="GO" id="GO:0019395">
    <property type="term" value="P:fatty acid oxidation"/>
    <property type="evidence" value="ECO:0007669"/>
    <property type="project" value="Ensembl"/>
</dbReference>
<dbReference type="GO" id="GO:0090459">
    <property type="term" value="P:intracellular aspartate homeostasis"/>
    <property type="evidence" value="ECO:0007669"/>
    <property type="project" value="Ensembl"/>
</dbReference>
<dbReference type="GO" id="GO:0090461">
    <property type="term" value="P:intracellular glutamate homeostasis"/>
    <property type="evidence" value="ECO:0007669"/>
    <property type="project" value="Ensembl"/>
</dbReference>
<dbReference type="GO" id="GO:0046722">
    <property type="term" value="P:lactic acid secretion"/>
    <property type="evidence" value="ECO:0007669"/>
    <property type="project" value="Ensembl"/>
</dbReference>
<dbReference type="GO" id="GO:2001295">
    <property type="term" value="P:malonyl-CoA biosynthetic process"/>
    <property type="evidence" value="ECO:0007669"/>
    <property type="project" value="UniProtKB-UniPathway"/>
</dbReference>
<dbReference type="GO" id="GO:0031999">
    <property type="term" value="P:negative regulation of fatty acid beta-oxidation"/>
    <property type="evidence" value="ECO:0007669"/>
    <property type="project" value="Ensembl"/>
</dbReference>
<dbReference type="GO" id="GO:0006098">
    <property type="term" value="P:pentose-phosphate shunt"/>
    <property type="evidence" value="ECO:0007669"/>
    <property type="project" value="Ensembl"/>
</dbReference>
<dbReference type="GO" id="GO:0060421">
    <property type="term" value="P:positive regulation of heart growth"/>
    <property type="evidence" value="ECO:0007669"/>
    <property type="project" value="Ensembl"/>
</dbReference>
<dbReference type="GO" id="GO:0010884">
    <property type="term" value="P:positive regulation of lipid storage"/>
    <property type="evidence" value="ECO:0007669"/>
    <property type="project" value="Ensembl"/>
</dbReference>
<dbReference type="GO" id="GO:0051289">
    <property type="term" value="P:protein homotetramerization"/>
    <property type="evidence" value="ECO:0000314"/>
    <property type="project" value="UniProtKB"/>
</dbReference>
<dbReference type="GO" id="GO:1903242">
    <property type="term" value="P:regulation of cardiac muscle hypertrophy in response to stress"/>
    <property type="evidence" value="ECO:0007669"/>
    <property type="project" value="Ensembl"/>
</dbReference>
<dbReference type="GO" id="GO:0010906">
    <property type="term" value="P:regulation of glucose metabolic process"/>
    <property type="evidence" value="ECO:0007669"/>
    <property type="project" value="Ensembl"/>
</dbReference>
<dbReference type="GO" id="GO:0007584">
    <property type="term" value="P:response to nutrient"/>
    <property type="evidence" value="ECO:0007669"/>
    <property type="project" value="Ensembl"/>
</dbReference>
<dbReference type="GO" id="GO:0009410">
    <property type="term" value="P:response to xenobiotic stimulus"/>
    <property type="evidence" value="ECO:0007669"/>
    <property type="project" value="Ensembl"/>
</dbReference>
<dbReference type="GO" id="GO:0072350">
    <property type="term" value="P:tricarboxylic acid metabolic process"/>
    <property type="evidence" value="ECO:0007669"/>
    <property type="project" value="Ensembl"/>
</dbReference>
<dbReference type="CDD" id="cd06850">
    <property type="entry name" value="biotinyl_domain"/>
    <property type="match status" value="1"/>
</dbReference>
<dbReference type="FunFam" id="2.40.460.10:FF:000001">
    <property type="entry name" value="Acetyl-CoA carboxylase 1"/>
    <property type="match status" value="1"/>
</dbReference>
<dbReference type="FunFam" id="2.40.50.100:FF:000005">
    <property type="entry name" value="Acetyl-CoA carboxylase 1"/>
    <property type="match status" value="1"/>
</dbReference>
<dbReference type="FunFam" id="3.30.470.20:FF:000005">
    <property type="entry name" value="Acetyl-CoA carboxylase 1"/>
    <property type="match status" value="1"/>
</dbReference>
<dbReference type="FunFam" id="3.90.1770.10:FF:000001">
    <property type="entry name" value="acetyl-CoA carboxylase 1"/>
    <property type="match status" value="1"/>
</dbReference>
<dbReference type="FunFam" id="3.30.1490.20:FF:000003">
    <property type="entry name" value="acetyl-CoA carboxylase isoform X1"/>
    <property type="match status" value="1"/>
</dbReference>
<dbReference type="FunFam" id="3.40.50.20:FF:000005">
    <property type="entry name" value="acetyl-CoA carboxylase isoform X2"/>
    <property type="match status" value="1"/>
</dbReference>
<dbReference type="FunFam" id="3.90.226.10:FF:000010">
    <property type="entry name" value="acetyl-CoA carboxylase isoform X2"/>
    <property type="match status" value="1"/>
</dbReference>
<dbReference type="Gene3D" id="2.40.50.100">
    <property type="match status" value="1"/>
</dbReference>
<dbReference type="Gene3D" id="3.40.50.20">
    <property type="match status" value="1"/>
</dbReference>
<dbReference type="Gene3D" id="3.90.226.10">
    <property type="entry name" value="2-enoyl-CoA Hydratase, Chain A, domain 1"/>
    <property type="match status" value="2"/>
</dbReference>
<dbReference type="Gene3D" id="3.30.1490.20">
    <property type="entry name" value="ATP-grasp fold, A domain"/>
    <property type="match status" value="1"/>
</dbReference>
<dbReference type="Gene3D" id="3.30.470.20">
    <property type="entry name" value="ATP-grasp fold, B domain"/>
    <property type="match status" value="1"/>
</dbReference>
<dbReference type="Gene3D" id="2.40.460.10">
    <property type="entry name" value="Biotin dependent carboxylase carboxyltransferase"/>
    <property type="match status" value="1"/>
</dbReference>
<dbReference type="Gene3D" id="3.90.1770.10">
    <property type="entry name" value="PreATP-grasp domain"/>
    <property type="match status" value="1"/>
</dbReference>
<dbReference type="InterPro" id="IPR049076">
    <property type="entry name" value="ACCA"/>
</dbReference>
<dbReference type="InterPro" id="IPR049074">
    <property type="entry name" value="ACCA_BT"/>
</dbReference>
<dbReference type="InterPro" id="IPR034733">
    <property type="entry name" value="AcCoA_carboxyl_beta"/>
</dbReference>
<dbReference type="InterPro" id="IPR013537">
    <property type="entry name" value="AcCoA_COase_cen"/>
</dbReference>
<dbReference type="InterPro" id="IPR011761">
    <property type="entry name" value="ATP-grasp"/>
</dbReference>
<dbReference type="InterPro" id="IPR013815">
    <property type="entry name" value="ATP_grasp_subdomain_1"/>
</dbReference>
<dbReference type="InterPro" id="IPR005481">
    <property type="entry name" value="BC-like_N"/>
</dbReference>
<dbReference type="InterPro" id="IPR011764">
    <property type="entry name" value="Biotin_carboxylation_dom"/>
</dbReference>
<dbReference type="InterPro" id="IPR005482">
    <property type="entry name" value="Biotin_COase_C"/>
</dbReference>
<dbReference type="InterPro" id="IPR000089">
    <property type="entry name" value="Biotin_lipoyl"/>
</dbReference>
<dbReference type="InterPro" id="IPR005479">
    <property type="entry name" value="CbamoylP_synth_lsu-like_ATP-bd"/>
</dbReference>
<dbReference type="InterPro" id="IPR029045">
    <property type="entry name" value="ClpP/crotonase-like_dom_sf"/>
</dbReference>
<dbReference type="InterPro" id="IPR011763">
    <property type="entry name" value="COA_CT_C"/>
</dbReference>
<dbReference type="InterPro" id="IPR011762">
    <property type="entry name" value="COA_CT_N"/>
</dbReference>
<dbReference type="InterPro" id="IPR016185">
    <property type="entry name" value="PreATP-grasp_dom_sf"/>
</dbReference>
<dbReference type="InterPro" id="IPR011054">
    <property type="entry name" value="Rudment_hybrid_motif"/>
</dbReference>
<dbReference type="InterPro" id="IPR011053">
    <property type="entry name" value="Single_hybrid_motif"/>
</dbReference>
<dbReference type="PANTHER" id="PTHR45728:SF1">
    <property type="entry name" value="ACETYL-COA CARBOXYLASE 2"/>
    <property type="match status" value="1"/>
</dbReference>
<dbReference type="PANTHER" id="PTHR45728">
    <property type="entry name" value="ACETYL-COA CARBOXYLASE, ISOFORM A"/>
    <property type="match status" value="1"/>
</dbReference>
<dbReference type="Pfam" id="PF08326">
    <property type="entry name" value="ACC_central"/>
    <property type="match status" value="1"/>
</dbReference>
<dbReference type="Pfam" id="PF21385">
    <property type="entry name" value="ACCA_BT"/>
    <property type="match status" value="1"/>
</dbReference>
<dbReference type="Pfam" id="PF02785">
    <property type="entry name" value="Biotin_carb_C"/>
    <property type="match status" value="1"/>
</dbReference>
<dbReference type="Pfam" id="PF00289">
    <property type="entry name" value="Biotin_carb_N"/>
    <property type="match status" value="1"/>
</dbReference>
<dbReference type="Pfam" id="PF00364">
    <property type="entry name" value="Biotin_lipoyl"/>
    <property type="match status" value="1"/>
</dbReference>
<dbReference type="Pfam" id="PF01039">
    <property type="entry name" value="Carboxyl_trans"/>
    <property type="match status" value="1"/>
</dbReference>
<dbReference type="Pfam" id="PF02786">
    <property type="entry name" value="CPSase_L_D2"/>
    <property type="match status" value="1"/>
</dbReference>
<dbReference type="SMART" id="SM00878">
    <property type="entry name" value="Biotin_carb_C"/>
    <property type="match status" value="1"/>
</dbReference>
<dbReference type="SUPFAM" id="SSF52096">
    <property type="entry name" value="ClpP/crotonase"/>
    <property type="match status" value="2"/>
</dbReference>
<dbReference type="SUPFAM" id="SSF56059">
    <property type="entry name" value="Glutathione synthetase ATP-binding domain-like"/>
    <property type="match status" value="1"/>
</dbReference>
<dbReference type="SUPFAM" id="SSF52440">
    <property type="entry name" value="PreATP-grasp domain"/>
    <property type="match status" value="1"/>
</dbReference>
<dbReference type="SUPFAM" id="SSF51246">
    <property type="entry name" value="Rudiment single hybrid motif"/>
    <property type="match status" value="1"/>
</dbReference>
<dbReference type="SUPFAM" id="SSF51230">
    <property type="entry name" value="Single hybrid motif"/>
    <property type="match status" value="1"/>
</dbReference>
<dbReference type="PROSITE" id="PS50975">
    <property type="entry name" value="ATP_GRASP"/>
    <property type="match status" value="1"/>
</dbReference>
<dbReference type="PROSITE" id="PS50979">
    <property type="entry name" value="BC"/>
    <property type="match status" value="1"/>
</dbReference>
<dbReference type="PROSITE" id="PS50968">
    <property type="entry name" value="BIOTINYL_LIPOYL"/>
    <property type="match status" value="1"/>
</dbReference>
<dbReference type="PROSITE" id="PS50989">
    <property type="entry name" value="COA_CT_CTER"/>
    <property type="match status" value="1"/>
</dbReference>
<dbReference type="PROSITE" id="PS50980">
    <property type="entry name" value="COA_CT_NTER"/>
    <property type="match status" value="1"/>
</dbReference>
<dbReference type="PROSITE" id="PS00866">
    <property type="entry name" value="CPSASE_1"/>
    <property type="match status" value="1"/>
</dbReference>
<dbReference type="PROSITE" id="PS00867">
    <property type="entry name" value="CPSASE_2"/>
    <property type="match status" value="1"/>
</dbReference>
<protein>
    <recommendedName>
        <fullName evidence="27">Acetyl-CoA carboxylase 2</fullName>
        <ecNumber evidence="14 18 19 20 21 22">6.4.1.2</ecNumber>
    </recommendedName>
    <alternativeName>
        <fullName>ACC-beta</fullName>
    </alternativeName>
</protein>
<evidence type="ECO:0000250" key="1"/>
<evidence type="ECO:0000250" key="2">
    <source>
        <dbReference type="UniProtKB" id="E9Q4Z2"/>
    </source>
</evidence>
<evidence type="ECO:0000250" key="3">
    <source>
        <dbReference type="UniProtKB" id="P11497"/>
    </source>
</evidence>
<evidence type="ECO:0000250" key="4">
    <source>
        <dbReference type="UniProtKB" id="Q13085"/>
    </source>
</evidence>
<evidence type="ECO:0000255" key="5">
    <source>
        <dbReference type="PROSITE-ProRule" id="PRU00409"/>
    </source>
</evidence>
<evidence type="ECO:0000255" key="6">
    <source>
        <dbReference type="PROSITE-ProRule" id="PRU00969"/>
    </source>
</evidence>
<evidence type="ECO:0000255" key="7">
    <source>
        <dbReference type="PROSITE-ProRule" id="PRU01066"/>
    </source>
</evidence>
<evidence type="ECO:0000255" key="8">
    <source>
        <dbReference type="PROSITE-ProRule" id="PRU01136"/>
    </source>
</evidence>
<evidence type="ECO:0000255" key="9">
    <source>
        <dbReference type="PROSITE-ProRule" id="PRU01137"/>
    </source>
</evidence>
<evidence type="ECO:0000255" key="10">
    <source>
        <dbReference type="PROSITE-ProRule" id="PRU01138"/>
    </source>
</evidence>
<evidence type="ECO:0000256" key="11">
    <source>
        <dbReference type="SAM" id="MobiDB-lite"/>
    </source>
</evidence>
<evidence type="ECO:0000269" key="12">
    <source>
    </source>
</evidence>
<evidence type="ECO:0000269" key="13">
    <source>
    </source>
</evidence>
<evidence type="ECO:0000269" key="14">
    <source>
    </source>
</evidence>
<evidence type="ECO:0000269" key="15">
    <source>
    </source>
</evidence>
<evidence type="ECO:0000269" key="16">
    <source>
    </source>
</evidence>
<evidence type="ECO:0000269" key="17">
    <source>
    </source>
</evidence>
<evidence type="ECO:0000269" key="18">
    <source>
    </source>
</evidence>
<evidence type="ECO:0000269" key="19">
    <source>
    </source>
</evidence>
<evidence type="ECO:0000269" key="20">
    <source>
    </source>
</evidence>
<evidence type="ECO:0000269" key="21">
    <source>
    </source>
</evidence>
<evidence type="ECO:0000269" key="22">
    <source>
    </source>
</evidence>
<evidence type="ECO:0000269" key="23">
    <source>
    </source>
</evidence>
<evidence type="ECO:0000269" key="24">
    <source ref="3"/>
</evidence>
<evidence type="ECO:0000303" key="25">
    <source>
    </source>
</evidence>
<evidence type="ECO:0000303" key="26">
    <source>
    </source>
</evidence>
<evidence type="ECO:0000305" key="27"/>
<evidence type="ECO:0000305" key="28">
    <source>
    </source>
</evidence>
<evidence type="ECO:0000305" key="29">
    <source>
    </source>
</evidence>
<evidence type="ECO:0000305" key="30">
    <source>
    </source>
</evidence>
<evidence type="ECO:0000312" key="31">
    <source>
        <dbReference type="HGNC" id="HGNC:85"/>
    </source>
</evidence>
<evidence type="ECO:0007744" key="32">
    <source>
    </source>
</evidence>
<evidence type="ECO:0007829" key="33">
    <source>
        <dbReference type="PDB" id="2DN8"/>
    </source>
</evidence>
<evidence type="ECO:0007829" key="34">
    <source>
        <dbReference type="PDB" id="2HJW"/>
    </source>
</evidence>
<evidence type="ECO:0007829" key="35">
    <source>
        <dbReference type="PDB" id="2KCC"/>
    </source>
</evidence>
<evidence type="ECO:0007829" key="36">
    <source>
        <dbReference type="PDB" id="3FF6"/>
    </source>
</evidence>
<evidence type="ECO:0007829" key="37">
    <source>
        <dbReference type="PDB" id="3GLK"/>
    </source>
</evidence>
<evidence type="ECO:0007829" key="38">
    <source>
        <dbReference type="PDB" id="3JRX"/>
    </source>
</evidence>
<evidence type="ECO:0007829" key="39">
    <source>
        <dbReference type="PDB" id="3TDC"/>
    </source>
</evidence>
<evidence type="ECO:0007829" key="40">
    <source>
        <dbReference type="PDB" id="4HQ6"/>
    </source>
</evidence>
<keyword id="KW-0002">3D-structure</keyword>
<keyword id="KW-0021">Allosteric enzyme</keyword>
<keyword id="KW-0025">Alternative splicing</keyword>
<keyword id="KW-0067">ATP-binding</keyword>
<keyword id="KW-0092">Biotin</keyword>
<keyword id="KW-0275">Fatty acid biosynthesis</keyword>
<keyword id="KW-0276">Fatty acid metabolism</keyword>
<keyword id="KW-0436">Ligase</keyword>
<keyword id="KW-0444">Lipid biosynthesis</keyword>
<keyword id="KW-0443">Lipid metabolism</keyword>
<keyword id="KW-0460">Magnesium</keyword>
<keyword id="KW-0464">Manganese</keyword>
<keyword id="KW-0479">Metal-binding</keyword>
<keyword id="KW-0496">Mitochondrion</keyword>
<keyword id="KW-0511">Multifunctional enzyme</keyword>
<keyword id="KW-0547">Nucleotide-binding</keyword>
<keyword id="KW-0597">Phosphoprotein</keyword>
<keyword id="KW-1267">Proteomics identification</keyword>
<keyword id="KW-1185">Reference proteome</keyword>
<keyword id="KW-0809">Transit peptide</keyword>